<keyword id="KW-0963">Cytoplasm</keyword>
<keyword id="KW-0238">DNA-binding</keyword>
<keyword id="KW-1185">Reference proteome</keyword>
<keyword id="KW-0804">Transcription</keyword>
<keyword id="KW-0805">Transcription regulation</keyword>
<comment type="subcellular location">
    <subcellularLocation>
        <location evidence="1">Cytoplasm</location>
    </subcellularLocation>
</comment>
<comment type="similarity">
    <text evidence="1">Belongs to the TACO1 family. YeeN subfamily.</text>
</comment>
<accession>A8AVG0</accession>
<organism>
    <name type="scientific">Streptococcus gordonii (strain Challis / ATCC 35105 / BCRC 15272 / CH1 / DL1 / V288)</name>
    <dbReference type="NCBI Taxonomy" id="467705"/>
    <lineage>
        <taxon>Bacteria</taxon>
        <taxon>Bacillati</taxon>
        <taxon>Bacillota</taxon>
        <taxon>Bacilli</taxon>
        <taxon>Lactobacillales</taxon>
        <taxon>Streptococcaceae</taxon>
        <taxon>Streptococcus</taxon>
    </lineage>
</organism>
<protein>
    <recommendedName>
        <fullName evidence="1">Probable transcriptional regulatory protein SGO_0454</fullName>
    </recommendedName>
</protein>
<dbReference type="EMBL" id="CP000725">
    <property type="protein sequence ID" value="ABV10904.1"/>
    <property type="molecule type" value="Genomic_DNA"/>
</dbReference>
<dbReference type="RefSeq" id="WP_011999961.1">
    <property type="nucleotide sequence ID" value="NC_009785.1"/>
</dbReference>
<dbReference type="SMR" id="A8AVG0"/>
<dbReference type="STRING" id="467705.SGO_0454"/>
<dbReference type="KEGG" id="sgo:SGO_0454"/>
<dbReference type="eggNOG" id="COG0217">
    <property type="taxonomic scope" value="Bacteria"/>
</dbReference>
<dbReference type="HOGENOM" id="CLU_062974_2_0_9"/>
<dbReference type="Proteomes" id="UP000001131">
    <property type="component" value="Chromosome"/>
</dbReference>
<dbReference type="GO" id="GO:0005829">
    <property type="term" value="C:cytosol"/>
    <property type="evidence" value="ECO:0007669"/>
    <property type="project" value="TreeGrafter"/>
</dbReference>
<dbReference type="GO" id="GO:0003677">
    <property type="term" value="F:DNA binding"/>
    <property type="evidence" value="ECO:0007669"/>
    <property type="project" value="UniProtKB-UniRule"/>
</dbReference>
<dbReference type="GO" id="GO:0006355">
    <property type="term" value="P:regulation of DNA-templated transcription"/>
    <property type="evidence" value="ECO:0007669"/>
    <property type="project" value="UniProtKB-UniRule"/>
</dbReference>
<dbReference type="FunFam" id="1.10.10.200:FF:000003">
    <property type="entry name" value="Probable transcriptional regulatory protein YeeN"/>
    <property type="match status" value="1"/>
</dbReference>
<dbReference type="FunFam" id="3.30.70.980:FF:000004">
    <property type="entry name" value="Probable transcriptional regulatory protein YeeN"/>
    <property type="match status" value="1"/>
</dbReference>
<dbReference type="Gene3D" id="1.10.10.200">
    <property type="match status" value="1"/>
</dbReference>
<dbReference type="Gene3D" id="3.30.70.980">
    <property type="match status" value="2"/>
</dbReference>
<dbReference type="HAMAP" id="MF_00693">
    <property type="entry name" value="Transcrip_reg_TACO1"/>
    <property type="match status" value="1"/>
</dbReference>
<dbReference type="HAMAP" id="MF_00918">
    <property type="entry name" value="Transcrip_reg_TACO1_YeeN"/>
    <property type="match status" value="1"/>
</dbReference>
<dbReference type="InterPro" id="IPR017856">
    <property type="entry name" value="Integrase-like_N"/>
</dbReference>
<dbReference type="InterPro" id="IPR048300">
    <property type="entry name" value="TACO1_YebC-like_2nd/3rd_dom"/>
</dbReference>
<dbReference type="InterPro" id="IPR049083">
    <property type="entry name" value="TACO1_YebC_N"/>
</dbReference>
<dbReference type="InterPro" id="IPR002876">
    <property type="entry name" value="Transcrip_reg_TACO1-like"/>
</dbReference>
<dbReference type="InterPro" id="IPR026564">
    <property type="entry name" value="Transcrip_reg_TACO1-like_dom3"/>
</dbReference>
<dbReference type="InterPro" id="IPR026562">
    <property type="entry name" value="Transcrip_reg_TACO1_YeeN"/>
</dbReference>
<dbReference type="InterPro" id="IPR029072">
    <property type="entry name" value="YebC-like"/>
</dbReference>
<dbReference type="NCBIfam" id="NF001030">
    <property type="entry name" value="PRK00110.1"/>
    <property type="match status" value="1"/>
</dbReference>
<dbReference type="NCBIfam" id="NF009044">
    <property type="entry name" value="PRK12378.1"/>
    <property type="match status" value="1"/>
</dbReference>
<dbReference type="NCBIfam" id="TIGR01033">
    <property type="entry name" value="YebC/PmpR family DNA-binding transcriptional regulator"/>
    <property type="match status" value="1"/>
</dbReference>
<dbReference type="PANTHER" id="PTHR12532">
    <property type="entry name" value="TRANSLATIONAL ACTIVATOR OF CYTOCHROME C OXIDASE 1"/>
    <property type="match status" value="1"/>
</dbReference>
<dbReference type="PANTHER" id="PTHR12532:SF0">
    <property type="entry name" value="TRANSLATIONAL ACTIVATOR OF CYTOCHROME C OXIDASE 1"/>
    <property type="match status" value="1"/>
</dbReference>
<dbReference type="Pfam" id="PF20772">
    <property type="entry name" value="TACO1_YebC_N"/>
    <property type="match status" value="1"/>
</dbReference>
<dbReference type="Pfam" id="PF01709">
    <property type="entry name" value="Transcrip_reg"/>
    <property type="match status" value="1"/>
</dbReference>
<dbReference type="SUPFAM" id="SSF75625">
    <property type="entry name" value="YebC-like"/>
    <property type="match status" value="1"/>
</dbReference>
<evidence type="ECO:0000255" key="1">
    <source>
        <dbReference type="HAMAP-Rule" id="MF_00918"/>
    </source>
</evidence>
<name>Y454_STRGC</name>
<feature type="chain" id="PRO_1000083174" description="Probable transcriptional regulatory protein SGO_0454">
    <location>
        <begin position="1"/>
        <end position="238"/>
    </location>
</feature>
<proteinExistence type="inferred from homology"/>
<sequence>MGRKWANIVAKKTAKDGANSKVYAKFGVEIYVAAKKGDPDPETNTALKFVIDRAKQAQVPKHVIDKAIDKAKGNTDETFTEGRYEGFGPNGSMLIVDTLTSNVNRTAANVRAAFGKNGGNMGASGSVSYLFDNKGVVVFAGDDADSIFELLLEADVDVDDVEAEEGTITVYTAPTDLHKAIVALRESGIEEFQVTELEMIPQSEVELSGDDLATFEKLVDVLEDDEDVQKVYTNVEGF</sequence>
<gene>
    <name type="ordered locus">SGO_0454</name>
</gene>
<reference key="1">
    <citation type="journal article" date="2007" name="J. Bacteriol.">
        <title>Genome-wide transcriptional changes in Streptococcus gordonii in response to competence signaling peptide.</title>
        <authorList>
            <person name="Vickerman M.M."/>
            <person name="Iobst S."/>
            <person name="Jesionowski A.M."/>
            <person name="Gill S.R."/>
        </authorList>
    </citation>
    <scope>NUCLEOTIDE SEQUENCE [LARGE SCALE GENOMIC DNA]</scope>
    <source>
        <strain>Challis / ATCC 35105 / BCRC 15272 / CH1 / DL1 / V288</strain>
    </source>
</reference>